<proteinExistence type="inferred from homology"/>
<keyword id="KW-0067">ATP-binding</keyword>
<keyword id="KW-0235">DNA replication</keyword>
<keyword id="KW-0547">Nucleotide-binding</keyword>
<keyword id="KW-1185">Reference proteome</keyword>
<protein>
    <recommendedName>
        <fullName evidence="1">ORC1-type DNA replication protein</fullName>
    </recommendedName>
</protein>
<sequence length="410" mass="45602">MSITLQKQETDQDPVDAILDTAENGKSVIRNREMLRFTYIPETIHHRDGEQRNVTHSLSPILKRSRPSNLLVYGKPGTGKTLVVKKILQKIQERVKRSDFPIKLVYTNAKDETTLYGLLVSFGRQLGLDEKELPPTGLAISEVFKRLIKAIDTGRTNAVFVIDEIDYLAHLVSKTRKDVLYQLTRANERIREGSLTIVGISNDLAFKERLDPRVLSALSEEEVVFANYSVDQIRMILEDRAGEAFVPGAVSSSALNLCAAMAGREHGDARRAIDLLRVAGEMAERAAADGVTEGHVRDAALKIEENKENTALRSYPLHEKLVILAVMRSKGSSTGEIYSTYRELCRLTGQAVLTQRRATQMLSDVELSGMVSGRITHQGIHGRTKKFKLTVPPATVREAFGDDLILADII</sequence>
<comment type="function">
    <text evidence="1">Involved in regulation of DNA replication.</text>
</comment>
<comment type="similarity">
    <text evidence="1">Belongs to the CDC6/cdc18 family.</text>
</comment>
<organism>
    <name type="scientific">Cenarchaeum symbiosum (strain A)</name>
    <dbReference type="NCBI Taxonomy" id="414004"/>
    <lineage>
        <taxon>Archaea</taxon>
        <taxon>Nitrososphaerota</taxon>
        <taxon>Candidatus Cenarchaeales</taxon>
        <taxon>Candidatus Cenarchaeaceae</taxon>
        <taxon>Candidatus Cenarchaeum</taxon>
    </lineage>
</organism>
<evidence type="ECO:0000255" key="1">
    <source>
        <dbReference type="HAMAP-Rule" id="MF_01407"/>
    </source>
</evidence>
<dbReference type="EMBL" id="DP000238">
    <property type="protein sequence ID" value="ABK78449.1"/>
    <property type="molecule type" value="Genomic_DNA"/>
</dbReference>
<dbReference type="SMR" id="A0RYN2"/>
<dbReference type="STRING" id="414004.CENSYa_1839"/>
<dbReference type="EnsemblBacteria" id="ABK78449">
    <property type="protein sequence ID" value="ABK78449"/>
    <property type="gene ID" value="CENSYa_1839"/>
</dbReference>
<dbReference type="KEGG" id="csy:CENSYa_1839"/>
<dbReference type="PATRIC" id="fig|414004.10.peg.1678"/>
<dbReference type="HOGENOM" id="CLU_025112_3_1_2"/>
<dbReference type="Proteomes" id="UP000000758">
    <property type="component" value="Chromosome"/>
</dbReference>
<dbReference type="GO" id="GO:0005524">
    <property type="term" value="F:ATP binding"/>
    <property type="evidence" value="ECO:0007669"/>
    <property type="project" value="UniProtKB-UniRule"/>
</dbReference>
<dbReference type="GO" id="GO:0016887">
    <property type="term" value="F:ATP hydrolysis activity"/>
    <property type="evidence" value="ECO:0007669"/>
    <property type="project" value="InterPro"/>
</dbReference>
<dbReference type="GO" id="GO:0006260">
    <property type="term" value="P:DNA replication"/>
    <property type="evidence" value="ECO:0007669"/>
    <property type="project" value="UniProtKB-UniRule"/>
</dbReference>
<dbReference type="CDD" id="cd00009">
    <property type="entry name" value="AAA"/>
    <property type="match status" value="1"/>
</dbReference>
<dbReference type="CDD" id="cd08768">
    <property type="entry name" value="Cdc6_C"/>
    <property type="match status" value="1"/>
</dbReference>
<dbReference type="CDD" id="cd18139">
    <property type="entry name" value="HLD_clamp_RarA"/>
    <property type="match status" value="1"/>
</dbReference>
<dbReference type="FunFam" id="1.10.8.60:FF:000073">
    <property type="entry name" value="ORC1-type DNA replication protein"/>
    <property type="match status" value="1"/>
</dbReference>
<dbReference type="FunFam" id="3.40.50.300:FF:000930">
    <property type="entry name" value="ORC1-type DNA replication protein"/>
    <property type="match status" value="1"/>
</dbReference>
<dbReference type="Gene3D" id="1.10.8.60">
    <property type="match status" value="1"/>
</dbReference>
<dbReference type="Gene3D" id="3.40.50.300">
    <property type="entry name" value="P-loop containing nucleotide triphosphate hydrolases"/>
    <property type="match status" value="1"/>
</dbReference>
<dbReference type="Gene3D" id="1.10.10.10">
    <property type="entry name" value="Winged helix-like DNA-binding domain superfamily/Winged helix DNA-binding domain"/>
    <property type="match status" value="1"/>
</dbReference>
<dbReference type="HAMAP" id="MF_01407">
    <property type="entry name" value="ORC1_type_DNA_replic_protein"/>
    <property type="match status" value="1"/>
</dbReference>
<dbReference type="InterPro" id="IPR003593">
    <property type="entry name" value="AAA+_ATPase"/>
</dbReference>
<dbReference type="InterPro" id="IPR049945">
    <property type="entry name" value="AAA_22"/>
</dbReference>
<dbReference type="InterPro" id="IPR015163">
    <property type="entry name" value="Cdc6_C"/>
</dbReference>
<dbReference type="InterPro" id="IPR055237">
    <property type="entry name" value="Cdc6_lid"/>
</dbReference>
<dbReference type="InterPro" id="IPR050311">
    <property type="entry name" value="ORC1/CDC6"/>
</dbReference>
<dbReference type="InterPro" id="IPR014277">
    <property type="entry name" value="Orc1/Cdc6_arc"/>
</dbReference>
<dbReference type="InterPro" id="IPR027417">
    <property type="entry name" value="P-loop_NTPase"/>
</dbReference>
<dbReference type="InterPro" id="IPR036388">
    <property type="entry name" value="WH-like_DNA-bd_sf"/>
</dbReference>
<dbReference type="InterPro" id="IPR036390">
    <property type="entry name" value="WH_DNA-bd_sf"/>
</dbReference>
<dbReference type="NCBIfam" id="TIGR02928">
    <property type="entry name" value="orc1/cdc6 family replication initiation protein"/>
    <property type="match status" value="1"/>
</dbReference>
<dbReference type="PANTHER" id="PTHR10763:SF26">
    <property type="entry name" value="CELL DIVISION CONTROL PROTEIN 6 HOMOLOG"/>
    <property type="match status" value="1"/>
</dbReference>
<dbReference type="PANTHER" id="PTHR10763">
    <property type="entry name" value="CELL DIVISION CONTROL PROTEIN 6-RELATED"/>
    <property type="match status" value="1"/>
</dbReference>
<dbReference type="Pfam" id="PF13401">
    <property type="entry name" value="AAA_22"/>
    <property type="match status" value="1"/>
</dbReference>
<dbReference type="Pfam" id="PF09079">
    <property type="entry name" value="Cdc6_C"/>
    <property type="match status" value="1"/>
</dbReference>
<dbReference type="Pfam" id="PF22703">
    <property type="entry name" value="Cdc6_lid"/>
    <property type="match status" value="1"/>
</dbReference>
<dbReference type="SMART" id="SM00382">
    <property type="entry name" value="AAA"/>
    <property type="match status" value="1"/>
</dbReference>
<dbReference type="SMART" id="SM01074">
    <property type="entry name" value="Cdc6_C"/>
    <property type="match status" value="1"/>
</dbReference>
<dbReference type="SUPFAM" id="SSF52540">
    <property type="entry name" value="P-loop containing nucleoside triphosphate hydrolases"/>
    <property type="match status" value="1"/>
</dbReference>
<dbReference type="SUPFAM" id="SSF46785">
    <property type="entry name" value="Winged helix' DNA-binding domain"/>
    <property type="match status" value="1"/>
</dbReference>
<gene>
    <name type="primary">cdc6</name>
    <name type="ordered locus">CENSYa_1839</name>
</gene>
<feature type="chain" id="PRO_0000307413" description="ORC1-type DNA replication protein">
    <location>
        <begin position="1"/>
        <end position="410"/>
    </location>
</feature>
<feature type="binding site" evidence="1">
    <location>
        <begin position="78"/>
        <end position="82"/>
    </location>
    <ligand>
        <name>ATP</name>
        <dbReference type="ChEBI" id="CHEBI:30616"/>
    </ligand>
</feature>
<feature type="binding site" evidence="1">
    <location>
        <position position="228"/>
    </location>
    <ligand>
        <name>ATP</name>
        <dbReference type="ChEBI" id="CHEBI:30616"/>
    </ligand>
</feature>
<feature type="binding site" evidence="1">
    <location>
        <position position="240"/>
    </location>
    <ligand>
        <name>ATP</name>
        <dbReference type="ChEBI" id="CHEBI:30616"/>
    </ligand>
</feature>
<reference key="1">
    <citation type="journal article" date="2006" name="Proc. Natl. Acad. Sci. U.S.A.">
        <title>Genomic analysis of the uncultivated marine crenarchaeote Cenarchaeum symbiosum.</title>
        <authorList>
            <person name="Hallam S.J."/>
            <person name="Konstantinidis K.T."/>
            <person name="Putnam N."/>
            <person name="Schleper C."/>
            <person name="Watanabe Y."/>
            <person name="Sugahara J."/>
            <person name="Preston C."/>
            <person name="de la Torre J."/>
            <person name="Richardson P.M."/>
            <person name="DeLong E.F."/>
        </authorList>
    </citation>
    <scope>NUCLEOTIDE SEQUENCE [LARGE SCALE GENOMIC DNA]</scope>
    <source>
        <strain>A</strain>
    </source>
</reference>
<accession>A0RYN2</accession>
<name>CDC6_CENSY</name>